<dbReference type="EC" id="3.6.5.3" evidence="2"/>
<dbReference type="EMBL" id="CP000153">
    <property type="protein sequence ID" value="ABB43626.1"/>
    <property type="molecule type" value="Genomic_DNA"/>
</dbReference>
<dbReference type="RefSeq" id="WP_011371980.1">
    <property type="nucleotide sequence ID" value="NC_007575.1"/>
</dbReference>
<dbReference type="SMR" id="Q30TQ5"/>
<dbReference type="STRING" id="326298.Suden_0345"/>
<dbReference type="KEGG" id="tdn:Suden_0345"/>
<dbReference type="eggNOG" id="COG0050">
    <property type="taxonomic scope" value="Bacteria"/>
</dbReference>
<dbReference type="HOGENOM" id="CLU_007265_0_1_7"/>
<dbReference type="OrthoDB" id="9803139at2"/>
<dbReference type="Proteomes" id="UP000002714">
    <property type="component" value="Chromosome"/>
</dbReference>
<dbReference type="GO" id="GO:0005829">
    <property type="term" value="C:cytosol"/>
    <property type="evidence" value="ECO:0007669"/>
    <property type="project" value="TreeGrafter"/>
</dbReference>
<dbReference type="GO" id="GO:0005525">
    <property type="term" value="F:GTP binding"/>
    <property type="evidence" value="ECO:0007669"/>
    <property type="project" value="UniProtKB-UniRule"/>
</dbReference>
<dbReference type="GO" id="GO:0003924">
    <property type="term" value="F:GTPase activity"/>
    <property type="evidence" value="ECO:0007669"/>
    <property type="project" value="InterPro"/>
</dbReference>
<dbReference type="GO" id="GO:0003746">
    <property type="term" value="F:translation elongation factor activity"/>
    <property type="evidence" value="ECO:0007669"/>
    <property type="project" value="UniProtKB-UniRule"/>
</dbReference>
<dbReference type="CDD" id="cd01884">
    <property type="entry name" value="EF_Tu"/>
    <property type="match status" value="1"/>
</dbReference>
<dbReference type="CDD" id="cd03697">
    <property type="entry name" value="EFTU_II"/>
    <property type="match status" value="1"/>
</dbReference>
<dbReference type="CDD" id="cd03707">
    <property type="entry name" value="EFTU_III"/>
    <property type="match status" value="1"/>
</dbReference>
<dbReference type="FunFam" id="2.40.30.10:FF:000001">
    <property type="entry name" value="Elongation factor Tu"/>
    <property type="match status" value="1"/>
</dbReference>
<dbReference type="FunFam" id="3.40.50.300:FF:000003">
    <property type="entry name" value="Elongation factor Tu"/>
    <property type="match status" value="1"/>
</dbReference>
<dbReference type="Gene3D" id="3.40.50.300">
    <property type="entry name" value="P-loop containing nucleotide triphosphate hydrolases"/>
    <property type="match status" value="1"/>
</dbReference>
<dbReference type="Gene3D" id="2.40.30.10">
    <property type="entry name" value="Translation factors"/>
    <property type="match status" value="2"/>
</dbReference>
<dbReference type="HAMAP" id="MF_00118_B">
    <property type="entry name" value="EF_Tu_B"/>
    <property type="match status" value="1"/>
</dbReference>
<dbReference type="InterPro" id="IPR041709">
    <property type="entry name" value="EF-Tu_GTP-bd"/>
</dbReference>
<dbReference type="InterPro" id="IPR050055">
    <property type="entry name" value="EF-Tu_GTPase"/>
</dbReference>
<dbReference type="InterPro" id="IPR004161">
    <property type="entry name" value="EFTu-like_2"/>
</dbReference>
<dbReference type="InterPro" id="IPR033720">
    <property type="entry name" value="EFTU_2"/>
</dbReference>
<dbReference type="InterPro" id="IPR031157">
    <property type="entry name" value="G_TR_CS"/>
</dbReference>
<dbReference type="InterPro" id="IPR027417">
    <property type="entry name" value="P-loop_NTPase"/>
</dbReference>
<dbReference type="InterPro" id="IPR005225">
    <property type="entry name" value="Small_GTP-bd"/>
</dbReference>
<dbReference type="InterPro" id="IPR000795">
    <property type="entry name" value="T_Tr_GTP-bd_dom"/>
</dbReference>
<dbReference type="InterPro" id="IPR009000">
    <property type="entry name" value="Transl_B-barrel_sf"/>
</dbReference>
<dbReference type="InterPro" id="IPR009001">
    <property type="entry name" value="Transl_elong_EF1A/Init_IF2_C"/>
</dbReference>
<dbReference type="InterPro" id="IPR004541">
    <property type="entry name" value="Transl_elong_EFTu/EF1A_bac/org"/>
</dbReference>
<dbReference type="InterPro" id="IPR004160">
    <property type="entry name" value="Transl_elong_EFTu/EF1A_C"/>
</dbReference>
<dbReference type="NCBIfam" id="TIGR00485">
    <property type="entry name" value="EF-Tu"/>
    <property type="match status" value="1"/>
</dbReference>
<dbReference type="NCBIfam" id="NF000766">
    <property type="entry name" value="PRK00049.1"/>
    <property type="match status" value="1"/>
</dbReference>
<dbReference type="NCBIfam" id="NF009372">
    <property type="entry name" value="PRK12735.1"/>
    <property type="match status" value="1"/>
</dbReference>
<dbReference type="NCBIfam" id="NF009373">
    <property type="entry name" value="PRK12736.1"/>
    <property type="match status" value="1"/>
</dbReference>
<dbReference type="NCBIfam" id="TIGR00231">
    <property type="entry name" value="small_GTP"/>
    <property type="match status" value="1"/>
</dbReference>
<dbReference type="PANTHER" id="PTHR43721:SF22">
    <property type="entry name" value="ELONGATION FACTOR TU, MITOCHONDRIAL"/>
    <property type="match status" value="1"/>
</dbReference>
<dbReference type="PANTHER" id="PTHR43721">
    <property type="entry name" value="ELONGATION FACTOR TU-RELATED"/>
    <property type="match status" value="1"/>
</dbReference>
<dbReference type="Pfam" id="PF00009">
    <property type="entry name" value="GTP_EFTU"/>
    <property type="match status" value="1"/>
</dbReference>
<dbReference type="Pfam" id="PF03144">
    <property type="entry name" value="GTP_EFTU_D2"/>
    <property type="match status" value="1"/>
</dbReference>
<dbReference type="Pfam" id="PF03143">
    <property type="entry name" value="GTP_EFTU_D3"/>
    <property type="match status" value="1"/>
</dbReference>
<dbReference type="PRINTS" id="PR00315">
    <property type="entry name" value="ELONGATNFCT"/>
</dbReference>
<dbReference type="SUPFAM" id="SSF50465">
    <property type="entry name" value="EF-Tu/eEF-1alpha/eIF2-gamma C-terminal domain"/>
    <property type="match status" value="1"/>
</dbReference>
<dbReference type="SUPFAM" id="SSF52540">
    <property type="entry name" value="P-loop containing nucleoside triphosphate hydrolases"/>
    <property type="match status" value="1"/>
</dbReference>
<dbReference type="SUPFAM" id="SSF50447">
    <property type="entry name" value="Translation proteins"/>
    <property type="match status" value="1"/>
</dbReference>
<dbReference type="PROSITE" id="PS00301">
    <property type="entry name" value="G_TR_1"/>
    <property type="match status" value="1"/>
</dbReference>
<dbReference type="PROSITE" id="PS51722">
    <property type="entry name" value="G_TR_2"/>
    <property type="match status" value="1"/>
</dbReference>
<sequence>MAKEKFARNKPHVNIGTIGHVDHGKTTLTAAITAVLAVTNGAKMMDYDAIDNAPEERERGITIATSHVEYETNNRHYAHVDCPGHADYVKNMITGAAQMDGAILVVSAADGPMPQTREHILLSKQVGVPYIVVFMNKEDMVDDEELLELVEMEIRELLDMYDFPGDDTPIVAGSAKEALDEAKTGTLGPWSAKIQKLMAAVDEYIPEPTREVDRDFLMPVEDVFSISGRGTVVTGRIERGTVKIGDAIEIVGIRDTQKTTVTGIEMFRKEMDQGLAGDNCGVLVRGIGKDDVERGQVLCKPGTINPHTKFTAEIYVLSKEEGGRHTPFFTNYRPQFYVRTTDVTGAIYLPEGTEMVMPGDNVSITVELIHPIAMEKGTKFAIREGGRTVGAGVVAEILA</sequence>
<keyword id="KW-0963">Cytoplasm</keyword>
<keyword id="KW-0251">Elongation factor</keyword>
<keyword id="KW-0342">GTP-binding</keyword>
<keyword id="KW-0378">Hydrolase</keyword>
<keyword id="KW-0460">Magnesium</keyword>
<keyword id="KW-0479">Metal-binding</keyword>
<keyword id="KW-0547">Nucleotide-binding</keyword>
<keyword id="KW-0648">Protein biosynthesis</keyword>
<keyword id="KW-1185">Reference proteome</keyword>
<organism>
    <name type="scientific">Sulfurimonas denitrificans (strain ATCC 33889 / DSM 1251)</name>
    <name type="common">Thiomicrospira denitrificans (strain ATCC 33889 / DSM 1251)</name>
    <dbReference type="NCBI Taxonomy" id="326298"/>
    <lineage>
        <taxon>Bacteria</taxon>
        <taxon>Pseudomonadati</taxon>
        <taxon>Campylobacterota</taxon>
        <taxon>Epsilonproteobacteria</taxon>
        <taxon>Campylobacterales</taxon>
        <taxon>Sulfurimonadaceae</taxon>
        <taxon>Sulfurimonas</taxon>
    </lineage>
</organism>
<comment type="function">
    <text evidence="2">GTP hydrolase that promotes the GTP-dependent binding of aminoacyl-tRNA to the A-site of ribosomes during protein biosynthesis.</text>
</comment>
<comment type="catalytic activity">
    <reaction evidence="2">
        <text>GTP + H2O = GDP + phosphate + H(+)</text>
        <dbReference type="Rhea" id="RHEA:19669"/>
        <dbReference type="ChEBI" id="CHEBI:15377"/>
        <dbReference type="ChEBI" id="CHEBI:15378"/>
        <dbReference type="ChEBI" id="CHEBI:37565"/>
        <dbReference type="ChEBI" id="CHEBI:43474"/>
        <dbReference type="ChEBI" id="CHEBI:58189"/>
        <dbReference type="EC" id="3.6.5.3"/>
    </reaction>
    <physiologicalReaction direction="left-to-right" evidence="2">
        <dbReference type="Rhea" id="RHEA:19670"/>
    </physiologicalReaction>
</comment>
<comment type="subunit">
    <text evidence="2">Monomer.</text>
</comment>
<comment type="subcellular location">
    <subcellularLocation>
        <location evidence="2">Cytoplasm</location>
    </subcellularLocation>
</comment>
<comment type="similarity">
    <text evidence="2">Belongs to the TRAFAC class translation factor GTPase superfamily. Classic translation factor GTPase family. EF-Tu/EF-1A subfamily.</text>
</comment>
<feature type="chain" id="PRO_1000015779" description="Elongation factor Tu">
    <location>
        <begin position="1"/>
        <end position="399"/>
    </location>
</feature>
<feature type="domain" description="tr-type G">
    <location>
        <begin position="10"/>
        <end position="209"/>
    </location>
</feature>
<feature type="region of interest" description="G1" evidence="1">
    <location>
        <begin position="19"/>
        <end position="26"/>
    </location>
</feature>
<feature type="region of interest" description="G2" evidence="1">
    <location>
        <begin position="60"/>
        <end position="64"/>
    </location>
</feature>
<feature type="region of interest" description="G3" evidence="1">
    <location>
        <begin position="81"/>
        <end position="84"/>
    </location>
</feature>
<feature type="region of interest" description="G4" evidence="1">
    <location>
        <begin position="136"/>
        <end position="139"/>
    </location>
</feature>
<feature type="region of interest" description="G5" evidence="1">
    <location>
        <begin position="174"/>
        <end position="176"/>
    </location>
</feature>
<feature type="binding site" evidence="2">
    <location>
        <begin position="19"/>
        <end position="26"/>
    </location>
    <ligand>
        <name>GTP</name>
        <dbReference type="ChEBI" id="CHEBI:37565"/>
    </ligand>
</feature>
<feature type="binding site" evidence="2">
    <location>
        <position position="26"/>
    </location>
    <ligand>
        <name>Mg(2+)</name>
        <dbReference type="ChEBI" id="CHEBI:18420"/>
    </ligand>
</feature>
<feature type="binding site" evidence="2">
    <location>
        <begin position="81"/>
        <end position="85"/>
    </location>
    <ligand>
        <name>GTP</name>
        <dbReference type="ChEBI" id="CHEBI:37565"/>
    </ligand>
</feature>
<feature type="binding site" evidence="2">
    <location>
        <begin position="136"/>
        <end position="139"/>
    </location>
    <ligand>
        <name>GTP</name>
        <dbReference type="ChEBI" id="CHEBI:37565"/>
    </ligand>
</feature>
<protein>
    <recommendedName>
        <fullName evidence="2">Elongation factor Tu</fullName>
        <shortName evidence="2">EF-Tu</shortName>
        <ecNumber evidence="2">3.6.5.3</ecNumber>
    </recommendedName>
</protein>
<accession>Q30TQ5</accession>
<evidence type="ECO:0000250" key="1"/>
<evidence type="ECO:0000255" key="2">
    <source>
        <dbReference type="HAMAP-Rule" id="MF_00118"/>
    </source>
</evidence>
<name>EFTU_SULDN</name>
<proteinExistence type="inferred from homology"/>
<gene>
    <name evidence="2" type="primary">tuf</name>
    <name type="ordered locus">Suden_0345</name>
</gene>
<reference key="1">
    <citation type="journal article" date="2008" name="Appl. Environ. Microbiol.">
        <title>Genome of the epsilonproteobacterial chemolithoautotroph Sulfurimonas denitrificans.</title>
        <authorList>
            <person name="Sievert S.M."/>
            <person name="Scott K.M."/>
            <person name="Klotz M.G."/>
            <person name="Chain P.S.G."/>
            <person name="Hauser L.J."/>
            <person name="Hemp J."/>
            <person name="Huegler M."/>
            <person name="Land M."/>
            <person name="Lapidus A."/>
            <person name="Larimer F.W."/>
            <person name="Lucas S."/>
            <person name="Malfatti S.A."/>
            <person name="Meyer F."/>
            <person name="Paulsen I.T."/>
            <person name="Ren Q."/>
            <person name="Simon J."/>
            <person name="Bailey K."/>
            <person name="Diaz E."/>
            <person name="Fitzpatrick K.A."/>
            <person name="Glover B."/>
            <person name="Gwatney N."/>
            <person name="Korajkic A."/>
            <person name="Long A."/>
            <person name="Mobberley J.M."/>
            <person name="Pantry S.N."/>
            <person name="Pazder G."/>
            <person name="Peterson S."/>
            <person name="Quintanilla J.D."/>
            <person name="Sprinkle R."/>
            <person name="Stephens J."/>
            <person name="Thomas P."/>
            <person name="Vaughn R."/>
            <person name="Weber M.J."/>
            <person name="Wooten L.L."/>
        </authorList>
    </citation>
    <scope>NUCLEOTIDE SEQUENCE [LARGE SCALE GENOMIC DNA]</scope>
    <source>
        <strain>ATCC 33889 / DSM 1251</strain>
    </source>
</reference>